<comment type="function">
    <text evidence="1">Endonuclease IV plays a role in DNA repair. It cleaves phosphodiester bonds at apurinic or apyrimidinic (AP) sites, generating a 3'-hydroxyl group and a 5'-terminal sugar phosphate.</text>
</comment>
<comment type="catalytic activity">
    <reaction evidence="1">
        <text>Endonucleolytic cleavage to 5'-phosphooligonucleotide end-products.</text>
        <dbReference type="EC" id="3.1.21.2"/>
    </reaction>
</comment>
<comment type="cofactor">
    <cofactor evidence="1">
        <name>Zn(2+)</name>
        <dbReference type="ChEBI" id="CHEBI:29105"/>
    </cofactor>
    <text evidence="1">Binds 3 Zn(2+) ions.</text>
</comment>
<comment type="similarity">
    <text evidence="1">Belongs to the AP endonuclease 2 family.</text>
</comment>
<sequence length="290" mass="32203">MKRVGAHVSIAGGVENAPLQASKIGAKAFALFTKNQRQWKSPELAALSIETFRRNCCDGGFRPEHILPHDSYLINLGSPEPDKLDRSRNAFFDEMQRVERLGLKMLNFHPGSHLNQIEPDACLQLIAESVNMALDRSCCVTAVIENTAGQGTNLGRSFDDLACIIDHVEDKSRVGVCLDTCHLFAGGYDIRTKEALDRTLDEFDRIVGIRYLKAMHLNDAKQPLGSRLDRHECIGKGAIGIEAFTAIMQHPLLDELPLILETPDSDGWQEEIGLLYRLAEEQVKDVSTPP</sequence>
<reference key="1">
    <citation type="submission" date="2008-05" db="EMBL/GenBank/DDBJ databases">
        <title>Complete sequence of Chlorobium limicola DSM 245.</title>
        <authorList>
            <consortium name="US DOE Joint Genome Institute"/>
            <person name="Lucas S."/>
            <person name="Copeland A."/>
            <person name="Lapidus A."/>
            <person name="Glavina del Rio T."/>
            <person name="Dalin E."/>
            <person name="Tice H."/>
            <person name="Bruce D."/>
            <person name="Goodwin L."/>
            <person name="Pitluck S."/>
            <person name="Schmutz J."/>
            <person name="Larimer F."/>
            <person name="Land M."/>
            <person name="Hauser L."/>
            <person name="Kyrpides N."/>
            <person name="Ovchinnikova G."/>
            <person name="Zhao F."/>
            <person name="Li T."/>
            <person name="Liu Z."/>
            <person name="Overmann J."/>
            <person name="Bryant D.A."/>
            <person name="Richardson P."/>
        </authorList>
    </citation>
    <scope>NUCLEOTIDE SEQUENCE [LARGE SCALE GENOMIC DNA]</scope>
    <source>
        <strain>DSM 245 / NBRC 103803 / 6330</strain>
    </source>
</reference>
<dbReference type="EC" id="3.1.21.2" evidence="1"/>
<dbReference type="EMBL" id="CP001097">
    <property type="protein sequence ID" value="ACD90807.1"/>
    <property type="molecule type" value="Genomic_DNA"/>
</dbReference>
<dbReference type="RefSeq" id="WP_012466680.1">
    <property type="nucleotide sequence ID" value="NC_010803.1"/>
</dbReference>
<dbReference type="SMR" id="B3EEJ7"/>
<dbReference type="STRING" id="290315.Clim_1768"/>
<dbReference type="KEGG" id="cli:Clim_1768"/>
<dbReference type="eggNOG" id="COG0648">
    <property type="taxonomic scope" value="Bacteria"/>
</dbReference>
<dbReference type="HOGENOM" id="CLU_025885_0_4_10"/>
<dbReference type="OrthoDB" id="9805666at2"/>
<dbReference type="Proteomes" id="UP000008841">
    <property type="component" value="Chromosome"/>
</dbReference>
<dbReference type="GO" id="GO:0008833">
    <property type="term" value="F:deoxyribonuclease IV (phage-T4-induced) activity"/>
    <property type="evidence" value="ECO:0007669"/>
    <property type="project" value="UniProtKB-UniRule"/>
</dbReference>
<dbReference type="GO" id="GO:0003677">
    <property type="term" value="F:DNA binding"/>
    <property type="evidence" value="ECO:0007669"/>
    <property type="project" value="InterPro"/>
</dbReference>
<dbReference type="GO" id="GO:0003906">
    <property type="term" value="F:DNA-(apurinic or apyrimidinic site) endonuclease activity"/>
    <property type="evidence" value="ECO:0007669"/>
    <property type="project" value="TreeGrafter"/>
</dbReference>
<dbReference type="GO" id="GO:0008081">
    <property type="term" value="F:phosphoric diester hydrolase activity"/>
    <property type="evidence" value="ECO:0007669"/>
    <property type="project" value="TreeGrafter"/>
</dbReference>
<dbReference type="GO" id="GO:0008270">
    <property type="term" value="F:zinc ion binding"/>
    <property type="evidence" value="ECO:0007669"/>
    <property type="project" value="UniProtKB-UniRule"/>
</dbReference>
<dbReference type="GO" id="GO:0006284">
    <property type="term" value="P:base-excision repair"/>
    <property type="evidence" value="ECO:0007669"/>
    <property type="project" value="TreeGrafter"/>
</dbReference>
<dbReference type="CDD" id="cd00019">
    <property type="entry name" value="AP2Ec"/>
    <property type="match status" value="1"/>
</dbReference>
<dbReference type="FunFam" id="3.20.20.150:FF:000001">
    <property type="entry name" value="Probable endonuclease 4"/>
    <property type="match status" value="1"/>
</dbReference>
<dbReference type="Gene3D" id="3.20.20.150">
    <property type="entry name" value="Divalent-metal-dependent TIM barrel enzymes"/>
    <property type="match status" value="1"/>
</dbReference>
<dbReference type="HAMAP" id="MF_00152">
    <property type="entry name" value="Nfo"/>
    <property type="match status" value="1"/>
</dbReference>
<dbReference type="InterPro" id="IPR001719">
    <property type="entry name" value="AP_endonuc_2"/>
</dbReference>
<dbReference type="InterPro" id="IPR018246">
    <property type="entry name" value="AP_endonuc_F2_Zn_BS"/>
</dbReference>
<dbReference type="InterPro" id="IPR036237">
    <property type="entry name" value="Xyl_isomerase-like_sf"/>
</dbReference>
<dbReference type="InterPro" id="IPR013022">
    <property type="entry name" value="Xyl_isomerase-like_TIM-brl"/>
</dbReference>
<dbReference type="NCBIfam" id="TIGR00587">
    <property type="entry name" value="nfo"/>
    <property type="match status" value="1"/>
</dbReference>
<dbReference type="NCBIfam" id="NF002199">
    <property type="entry name" value="PRK01060.1-4"/>
    <property type="match status" value="1"/>
</dbReference>
<dbReference type="PANTHER" id="PTHR21445:SF0">
    <property type="entry name" value="APURINIC-APYRIMIDINIC ENDONUCLEASE"/>
    <property type="match status" value="1"/>
</dbReference>
<dbReference type="PANTHER" id="PTHR21445">
    <property type="entry name" value="ENDONUCLEASE IV ENDODEOXYRIBONUCLEASE IV"/>
    <property type="match status" value="1"/>
</dbReference>
<dbReference type="Pfam" id="PF01261">
    <property type="entry name" value="AP_endonuc_2"/>
    <property type="match status" value="1"/>
</dbReference>
<dbReference type="SMART" id="SM00518">
    <property type="entry name" value="AP2Ec"/>
    <property type="match status" value="1"/>
</dbReference>
<dbReference type="SUPFAM" id="SSF51658">
    <property type="entry name" value="Xylose isomerase-like"/>
    <property type="match status" value="1"/>
</dbReference>
<dbReference type="PROSITE" id="PS00729">
    <property type="entry name" value="AP_NUCLEASE_F2_1"/>
    <property type="match status" value="1"/>
</dbReference>
<dbReference type="PROSITE" id="PS00730">
    <property type="entry name" value="AP_NUCLEASE_F2_2"/>
    <property type="match status" value="1"/>
</dbReference>
<dbReference type="PROSITE" id="PS00731">
    <property type="entry name" value="AP_NUCLEASE_F2_3"/>
    <property type="match status" value="1"/>
</dbReference>
<dbReference type="PROSITE" id="PS51432">
    <property type="entry name" value="AP_NUCLEASE_F2_4"/>
    <property type="match status" value="1"/>
</dbReference>
<proteinExistence type="inferred from homology"/>
<feature type="chain" id="PRO_1000096871" description="Probable endonuclease 4">
    <location>
        <begin position="1"/>
        <end position="290"/>
    </location>
</feature>
<feature type="binding site" evidence="1">
    <location>
        <position position="69"/>
    </location>
    <ligand>
        <name>Zn(2+)</name>
        <dbReference type="ChEBI" id="CHEBI:29105"/>
        <label>1</label>
    </ligand>
</feature>
<feature type="binding site" evidence="1">
    <location>
        <position position="109"/>
    </location>
    <ligand>
        <name>Zn(2+)</name>
        <dbReference type="ChEBI" id="CHEBI:29105"/>
        <label>1</label>
    </ligand>
</feature>
<feature type="binding site" evidence="1">
    <location>
        <position position="145"/>
    </location>
    <ligand>
        <name>Zn(2+)</name>
        <dbReference type="ChEBI" id="CHEBI:29105"/>
        <label>1</label>
    </ligand>
</feature>
<feature type="binding site" evidence="1">
    <location>
        <position position="145"/>
    </location>
    <ligand>
        <name>Zn(2+)</name>
        <dbReference type="ChEBI" id="CHEBI:29105"/>
        <label>2</label>
    </ligand>
</feature>
<feature type="binding site" evidence="1">
    <location>
        <position position="179"/>
    </location>
    <ligand>
        <name>Zn(2+)</name>
        <dbReference type="ChEBI" id="CHEBI:29105"/>
        <label>2</label>
    </ligand>
</feature>
<feature type="binding site" evidence="1">
    <location>
        <position position="182"/>
    </location>
    <ligand>
        <name>Zn(2+)</name>
        <dbReference type="ChEBI" id="CHEBI:29105"/>
        <label>3</label>
    </ligand>
</feature>
<feature type="binding site" evidence="1">
    <location>
        <position position="216"/>
    </location>
    <ligand>
        <name>Zn(2+)</name>
        <dbReference type="ChEBI" id="CHEBI:29105"/>
        <label>2</label>
    </ligand>
</feature>
<feature type="binding site" evidence="1">
    <location>
        <position position="229"/>
    </location>
    <ligand>
        <name>Zn(2+)</name>
        <dbReference type="ChEBI" id="CHEBI:29105"/>
        <label>3</label>
    </ligand>
</feature>
<feature type="binding site" evidence="1">
    <location>
        <position position="231"/>
    </location>
    <ligand>
        <name>Zn(2+)</name>
        <dbReference type="ChEBI" id="CHEBI:29105"/>
        <label>3</label>
    </ligand>
</feature>
<feature type="binding site" evidence="1">
    <location>
        <position position="261"/>
    </location>
    <ligand>
        <name>Zn(2+)</name>
        <dbReference type="ChEBI" id="CHEBI:29105"/>
        <label>2</label>
    </ligand>
</feature>
<organism>
    <name type="scientific">Chlorobium limicola (strain DSM 245 / NBRC 103803 / 6330)</name>
    <dbReference type="NCBI Taxonomy" id="290315"/>
    <lineage>
        <taxon>Bacteria</taxon>
        <taxon>Pseudomonadati</taxon>
        <taxon>Chlorobiota</taxon>
        <taxon>Chlorobiia</taxon>
        <taxon>Chlorobiales</taxon>
        <taxon>Chlorobiaceae</taxon>
        <taxon>Chlorobium/Pelodictyon group</taxon>
        <taxon>Chlorobium</taxon>
    </lineage>
</organism>
<evidence type="ECO:0000255" key="1">
    <source>
        <dbReference type="HAMAP-Rule" id="MF_00152"/>
    </source>
</evidence>
<accession>B3EEJ7</accession>
<name>END4_CHLL2</name>
<gene>
    <name evidence="1" type="primary">nfo</name>
    <name type="ordered locus">Clim_1768</name>
</gene>
<keyword id="KW-0227">DNA damage</keyword>
<keyword id="KW-0234">DNA repair</keyword>
<keyword id="KW-0255">Endonuclease</keyword>
<keyword id="KW-0378">Hydrolase</keyword>
<keyword id="KW-0479">Metal-binding</keyword>
<keyword id="KW-0540">Nuclease</keyword>
<keyword id="KW-0862">Zinc</keyword>
<protein>
    <recommendedName>
        <fullName evidence="1">Probable endonuclease 4</fullName>
        <ecNumber evidence="1">3.1.21.2</ecNumber>
    </recommendedName>
    <alternativeName>
        <fullName evidence="1">Endodeoxyribonuclease IV</fullName>
    </alternativeName>
    <alternativeName>
        <fullName evidence="1">Endonuclease IV</fullName>
    </alternativeName>
</protein>